<name>CSLA4_ORYSJ</name>
<evidence type="ECO:0000250" key="1">
    <source>
        <dbReference type="UniProtKB" id="Q7PC76"/>
    </source>
</evidence>
<evidence type="ECO:0000255" key="2"/>
<evidence type="ECO:0000303" key="3">
    <source>
    </source>
</evidence>
<evidence type="ECO:0000305" key="4"/>
<protein>
    <recommendedName>
        <fullName evidence="4">Probable glucomannan 4-beta-mannosyltransferase 4</fullName>
        <ecNumber evidence="1">2.4.1.32</ecNumber>
    </recommendedName>
    <alternativeName>
        <fullName evidence="3">Cellulose synthase-like protein A4</fullName>
        <shortName evidence="3">OsCslA4</shortName>
    </alternativeName>
    <alternativeName>
        <fullName evidence="4">Glucomannan synthase</fullName>
    </alternativeName>
    <alternativeName>
        <fullName evidence="4">Mannan synthase 4</fullName>
    </alternativeName>
</protein>
<gene>
    <name evidence="3" type="primary">CSLA4</name>
    <name type="ordered locus">Os03g0169500</name>
    <name type="ordered locus">LOC_Os03g07350</name>
    <name type="ORF">OsJ_009219</name>
    <name type="ORF">OSJNBa0091P11.21</name>
</gene>
<organism>
    <name type="scientific">Oryza sativa subsp. japonica</name>
    <name type="common">Rice</name>
    <dbReference type="NCBI Taxonomy" id="39947"/>
    <lineage>
        <taxon>Eukaryota</taxon>
        <taxon>Viridiplantae</taxon>
        <taxon>Streptophyta</taxon>
        <taxon>Embryophyta</taxon>
        <taxon>Tracheophyta</taxon>
        <taxon>Spermatophyta</taxon>
        <taxon>Magnoliopsida</taxon>
        <taxon>Liliopsida</taxon>
        <taxon>Poales</taxon>
        <taxon>Poaceae</taxon>
        <taxon>BOP clade</taxon>
        <taxon>Oryzoideae</taxon>
        <taxon>Oryzeae</taxon>
        <taxon>Oryzinae</taxon>
        <taxon>Oryza</taxon>
        <taxon>Oryza sativa</taxon>
    </lineage>
</organism>
<reference key="1">
    <citation type="journal article" date="2005" name="Genome Res.">
        <title>Sequence, annotation, and analysis of synteny between rice chromosome 3 and diverged grass species.</title>
        <authorList>
            <consortium name="The rice chromosome 3 sequencing consortium"/>
            <person name="Buell C.R."/>
            <person name="Yuan Q."/>
            <person name="Ouyang S."/>
            <person name="Liu J."/>
            <person name="Zhu W."/>
            <person name="Wang A."/>
            <person name="Maiti R."/>
            <person name="Haas B."/>
            <person name="Wortman J."/>
            <person name="Pertea M."/>
            <person name="Jones K.M."/>
            <person name="Kim M."/>
            <person name="Overton L."/>
            <person name="Tsitrin T."/>
            <person name="Fadrosh D."/>
            <person name="Bera J."/>
            <person name="Weaver B."/>
            <person name="Jin S."/>
            <person name="Johri S."/>
            <person name="Reardon M."/>
            <person name="Webb K."/>
            <person name="Hill J."/>
            <person name="Moffat K."/>
            <person name="Tallon L."/>
            <person name="Van Aken S."/>
            <person name="Lewis M."/>
            <person name="Utterback T."/>
            <person name="Feldblyum T."/>
            <person name="Zismann V."/>
            <person name="Iobst S."/>
            <person name="Hsiao J."/>
            <person name="de Vazeille A.R."/>
            <person name="Salzberg S.L."/>
            <person name="White O."/>
            <person name="Fraser C.M."/>
            <person name="Yu Y."/>
            <person name="Kim H."/>
            <person name="Rambo T."/>
            <person name="Currie J."/>
            <person name="Collura K."/>
            <person name="Kernodle-Thompson S."/>
            <person name="Wei F."/>
            <person name="Kudrna K."/>
            <person name="Ammiraju J.S.S."/>
            <person name="Luo M."/>
            <person name="Goicoechea J.L."/>
            <person name="Wing R.A."/>
            <person name="Henry D."/>
            <person name="Oates R."/>
            <person name="Palmer M."/>
            <person name="Pries G."/>
            <person name="Saski C."/>
            <person name="Simmons J."/>
            <person name="Soderlund C."/>
            <person name="Nelson W."/>
            <person name="de la Bastide M."/>
            <person name="Spiegel L."/>
            <person name="Nascimento L."/>
            <person name="Huang E."/>
            <person name="Preston R."/>
            <person name="Zutavern T."/>
            <person name="Palmer L."/>
            <person name="O'Shaughnessy A."/>
            <person name="Dike S."/>
            <person name="McCombie W.R."/>
            <person name="Minx P."/>
            <person name="Cordum H."/>
            <person name="Wilson R."/>
            <person name="Jin W."/>
            <person name="Lee H.R."/>
            <person name="Jiang J."/>
            <person name="Jackson S."/>
        </authorList>
    </citation>
    <scope>NUCLEOTIDE SEQUENCE [LARGE SCALE GENOMIC DNA]</scope>
    <source>
        <strain>cv. Nipponbare</strain>
    </source>
</reference>
<reference key="2">
    <citation type="journal article" date="2005" name="Nature">
        <title>The map-based sequence of the rice genome.</title>
        <authorList>
            <consortium name="International rice genome sequencing project (IRGSP)"/>
        </authorList>
    </citation>
    <scope>NUCLEOTIDE SEQUENCE [LARGE SCALE GENOMIC DNA]</scope>
    <source>
        <strain>cv. Nipponbare</strain>
    </source>
</reference>
<reference key="3">
    <citation type="journal article" date="2008" name="Nucleic Acids Res.">
        <title>The rice annotation project database (RAP-DB): 2008 update.</title>
        <authorList>
            <consortium name="The rice annotation project (RAP)"/>
        </authorList>
    </citation>
    <scope>GENOME REANNOTATION</scope>
    <source>
        <strain>cv. Nipponbare</strain>
    </source>
</reference>
<reference key="4">
    <citation type="journal article" date="2013" name="Rice">
        <title>Improvement of the Oryza sativa Nipponbare reference genome using next generation sequence and optical map data.</title>
        <authorList>
            <person name="Kawahara Y."/>
            <person name="de la Bastide M."/>
            <person name="Hamilton J.P."/>
            <person name="Kanamori H."/>
            <person name="McCombie W.R."/>
            <person name="Ouyang S."/>
            <person name="Schwartz D.C."/>
            <person name="Tanaka T."/>
            <person name="Wu J."/>
            <person name="Zhou S."/>
            <person name="Childs K.L."/>
            <person name="Davidson R.M."/>
            <person name="Lin H."/>
            <person name="Quesada-Ocampo L."/>
            <person name="Vaillancourt B."/>
            <person name="Sakai H."/>
            <person name="Lee S.S."/>
            <person name="Kim J."/>
            <person name="Numa H."/>
            <person name="Itoh T."/>
            <person name="Buell C.R."/>
            <person name="Matsumoto T."/>
        </authorList>
    </citation>
    <scope>GENOME REANNOTATION</scope>
    <source>
        <strain>cv. Nipponbare</strain>
    </source>
</reference>
<reference key="5">
    <citation type="journal article" date="2005" name="PLoS Biol.">
        <title>The genomes of Oryza sativa: a history of duplications.</title>
        <authorList>
            <person name="Yu J."/>
            <person name="Wang J."/>
            <person name="Lin W."/>
            <person name="Li S."/>
            <person name="Li H."/>
            <person name="Zhou J."/>
            <person name="Ni P."/>
            <person name="Dong W."/>
            <person name="Hu S."/>
            <person name="Zeng C."/>
            <person name="Zhang J."/>
            <person name="Zhang Y."/>
            <person name="Li R."/>
            <person name="Xu Z."/>
            <person name="Li S."/>
            <person name="Li X."/>
            <person name="Zheng H."/>
            <person name="Cong L."/>
            <person name="Lin L."/>
            <person name="Yin J."/>
            <person name="Geng J."/>
            <person name="Li G."/>
            <person name="Shi J."/>
            <person name="Liu J."/>
            <person name="Lv H."/>
            <person name="Li J."/>
            <person name="Wang J."/>
            <person name="Deng Y."/>
            <person name="Ran L."/>
            <person name="Shi X."/>
            <person name="Wang X."/>
            <person name="Wu Q."/>
            <person name="Li C."/>
            <person name="Ren X."/>
            <person name="Wang J."/>
            <person name="Wang X."/>
            <person name="Li D."/>
            <person name="Liu D."/>
            <person name="Zhang X."/>
            <person name="Ji Z."/>
            <person name="Zhao W."/>
            <person name="Sun Y."/>
            <person name="Zhang Z."/>
            <person name="Bao J."/>
            <person name="Han Y."/>
            <person name="Dong L."/>
            <person name="Ji J."/>
            <person name="Chen P."/>
            <person name="Wu S."/>
            <person name="Liu J."/>
            <person name="Xiao Y."/>
            <person name="Bu D."/>
            <person name="Tan J."/>
            <person name="Yang L."/>
            <person name="Ye C."/>
            <person name="Zhang J."/>
            <person name="Xu J."/>
            <person name="Zhou Y."/>
            <person name="Yu Y."/>
            <person name="Zhang B."/>
            <person name="Zhuang S."/>
            <person name="Wei H."/>
            <person name="Liu B."/>
            <person name="Lei M."/>
            <person name="Yu H."/>
            <person name="Li Y."/>
            <person name="Xu H."/>
            <person name="Wei S."/>
            <person name="He X."/>
            <person name="Fang L."/>
            <person name="Zhang Z."/>
            <person name="Zhang Y."/>
            <person name="Huang X."/>
            <person name="Su Z."/>
            <person name="Tong W."/>
            <person name="Li J."/>
            <person name="Tong Z."/>
            <person name="Li S."/>
            <person name="Ye J."/>
            <person name="Wang L."/>
            <person name="Fang L."/>
            <person name="Lei T."/>
            <person name="Chen C.-S."/>
            <person name="Chen H.-C."/>
            <person name="Xu Z."/>
            <person name="Li H."/>
            <person name="Huang H."/>
            <person name="Zhang F."/>
            <person name="Xu H."/>
            <person name="Li N."/>
            <person name="Zhao C."/>
            <person name="Li S."/>
            <person name="Dong L."/>
            <person name="Huang Y."/>
            <person name="Li L."/>
            <person name="Xi Y."/>
            <person name="Qi Q."/>
            <person name="Li W."/>
            <person name="Zhang B."/>
            <person name="Hu W."/>
            <person name="Zhang Y."/>
            <person name="Tian X."/>
            <person name="Jiao Y."/>
            <person name="Liang X."/>
            <person name="Jin J."/>
            <person name="Gao L."/>
            <person name="Zheng W."/>
            <person name="Hao B."/>
            <person name="Liu S.-M."/>
            <person name="Wang W."/>
            <person name="Yuan L."/>
            <person name="Cao M."/>
            <person name="McDermott J."/>
            <person name="Samudrala R."/>
            <person name="Wang J."/>
            <person name="Wong G.K.-S."/>
            <person name="Yang H."/>
        </authorList>
    </citation>
    <scope>NUCLEOTIDE SEQUENCE [LARGE SCALE GENOMIC DNA]</scope>
    <source>
        <strain>cv. Nipponbare</strain>
    </source>
</reference>
<reference key="6">
    <citation type="submission" date="2007-09" db="EMBL/GenBank/DDBJ databases">
        <title>Oryza sativa full length cDNA.</title>
        <authorList>
            <consortium name="The rice full-length cDNA consortium"/>
        </authorList>
    </citation>
    <scope>NUCLEOTIDE SEQUENCE [LARGE SCALE MRNA]</scope>
    <source>
        <strain>cv. Nipponbare</strain>
    </source>
</reference>
<reference key="7">
    <citation type="journal article" date="2002" name="Plant Physiol.">
        <title>Cellulose synthase-like genes of rice.</title>
        <authorList>
            <person name="Hazen S.P."/>
            <person name="Scott-Craig J.S."/>
            <person name="Walton J.D."/>
        </authorList>
    </citation>
    <scope>IDENTIFICATION</scope>
    <scope>GENE FAMILY</scope>
    <scope>NOMENCLATURE</scope>
</reference>
<accession>Q8S7W0</accession>
<accession>A0A0P0VTN5</accession>
<accession>A3AEJ7</accession>
<accession>B9FBJ8</accession>
<accession>Q0DUS4</accession>
<accession>Q10R71</accession>
<accession>Q7PC74</accession>
<dbReference type="EC" id="2.4.1.32" evidence="1"/>
<dbReference type="EMBL" id="AC073556">
    <property type="protein sequence ID" value="AAL84294.1"/>
    <property type="molecule type" value="Genomic_DNA"/>
</dbReference>
<dbReference type="EMBL" id="DP000009">
    <property type="protein sequence ID" value="ABF94194.1"/>
    <property type="status" value="ALT_SEQ"/>
    <property type="molecule type" value="Genomic_DNA"/>
</dbReference>
<dbReference type="EMBL" id="AP008209">
    <property type="protein sequence ID" value="BAF11014.2"/>
    <property type="status" value="ALT_SEQ"/>
    <property type="molecule type" value="Genomic_DNA"/>
</dbReference>
<dbReference type="EMBL" id="AP014959">
    <property type="protein sequence ID" value="BAS82512.1"/>
    <property type="molecule type" value="Genomic_DNA"/>
</dbReference>
<dbReference type="EMBL" id="CM000140">
    <property type="protein sequence ID" value="EEE58400.1"/>
    <property type="status" value="ALT_SEQ"/>
    <property type="molecule type" value="Genomic_DNA"/>
</dbReference>
<dbReference type="EMBL" id="AK287855">
    <property type="status" value="NOT_ANNOTATED_CDS"/>
    <property type="molecule type" value="mRNA"/>
</dbReference>
<dbReference type="EMBL" id="BK000082">
    <property type="protein sequence ID" value="DAA01745.1"/>
    <property type="status" value="ALT_SEQ"/>
    <property type="molecule type" value="Genomic_DNA"/>
</dbReference>
<dbReference type="RefSeq" id="XP_015630733.1">
    <property type="nucleotide sequence ID" value="XM_015775247.1"/>
</dbReference>
<dbReference type="SMR" id="Q8S7W0"/>
<dbReference type="FunCoup" id="Q8S7W0">
    <property type="interactions" value="16"/>
</dbReference>
<dbReference type="STRING" id="39947.Q8S7W0"/>
<dbReference type="CAZy" id="GT2">
    <property type="family name" value="Glycosyltransferase Family 2"/>
</dbReference>
<dbReference type="PaxDb" id="39947-Q8S7W0"/>
<dbReference type="EnsemblPlants" id="Os03t0169500-01">
    <property type="protein sequence ID" value="Os03t0169500-01"/>
    <property type="gene ID" value="Os03g0169500"/>
</dbReference>
<dbReference type="Gramene" id="Os03t0169500-01">
    <property type="protein sequence ID" value="Os03t0169500-01"/>
    <property type="gene ID" value="Os03g0169500"/>
</dbReference>
<dbReference type="KEGG" id="dosa:Os03g0169500"/>
<dbReference type="eggNOG" id="ENOG502SHF0">
    <property type="taxonomic scope" value="Eukaryota"/>
</dbReference>
<dbReference type="HOGENOM" id="CLU_012856_2_0_1"/>
<dbReference type="InParanoid" id="Q8S7W0"/>
<dbReference type="OMA" id="FAVWACM"/>
<dbReference type="OrthoDB" id="72851at2759"/>
<dbReference type="Proteomes" id="UP000000763">
    <property type="component" value="Chromosome 3"/>
</dbReference>
<dbReference type="Proteomes" id="UP000007752">
    <property type="component" value="Chromosome 3"/>
</dbReference>
<dbReference type="Proteomes" id="UP000059680">
    <property type="component" value="Chromosome 3"/>
</dbReference>
<dbReference type="GO" id="GO:0005794">
    <property type="term" value="C:Golgi apparatus"/>
    <property type="evidence" value="ECO:0000318"/>
    <property type="project" value="GO_Central"/>
</dbReference>
<dbReference type="GO" id="GO:0000139">
    <property type="term" value="C:Golgi membrane"/>
    <property type="evidence" value="ECO:0007669"/>
    <property type="project" value="UniProtKB-SubCell"/>
</dbReference>
<dbReference type="GO" id="GO:0047259">
    <property type="term" value="F:glucomannan 4-beta-mannosyltransferase activity"/>
    <property type="evidence" value="ECO:0007669"/>
    <property type="project" value="UniProtKB-EC"/>
</dbReference>
<dbReference type="GO" id="GO:0051753">
    <property type="term" value="F:mannan synthase activity"/>
    <property type="evidence" value="ECO:0000318"/>
    <property type="project" value="GO_Central"/>
</dbReference>
<dbReference type="GO" id="GO:0071555">
    <property type="term" value="P:cell wall organization"/>
    <property type="evidence" value="ECO:0007669"/>
    <property type="project" value="UniProtKB-KW"/>
</dbReference>
<dbReference type="CDD" id="cd06437">
    <property type="entry name" value="CESA_CaSu_A2"/>
    <property type="match status" value="1"/>
</dbReference>
<dbReference type="FunFam" id="3.90.550.10:FF:000015">
    <property type="entry name" value="Glucomannan 4-beta-mannosyltransferase 9"/>
    <property type="match status" value="1"/>
</dbReference>
<dbReference type="Gene3D" id="3.90.550.10">
    <property type="entry name" value="Spore Coat Polysaccharide Biosynthesis Protein SpsA, Chain A"/>
    <property type="match status" value="1"/>
</dbReference>
<dbReference type="InterPro" id="IPR001173">
    <property type="entry name" value="Glyco_trans_2-like"/>
</dbReference>
<dbReference type="InterPro" id="IPR029044">
    <property type="entry name" value="Nucleotide-diphossugar_trans"/>
</dbReference>
<dbReference type="PANTHER" id="PTHR32044:SF43">
    <property type="entry name" value="GLUCOMANNAN 4-BETA-MANNOSYLTRANSFERASE 4-RELATED"/>
    <property type="match status" value="1"/>
</dbReference>
<dbReference type="PANTHER" id="PTHR32044">
    <property type="entry name" value="GLUCOMANNAN 4-BETA-MANNOSYLTRANSFERASE 9"/>
    <property type="match status" value="1"/>
</dbReference>
<dbReference type="Pfam" id="PF13632">
    <property type="entry name" value="Glyco_trans_2_3"/>
    <property type="match status" value="1"/>
</dbReference>
<dbReference type="SUPFAM" id="SSF53448">
    <property type="entry name" value="Nucleotide-diphospho-sugar transferases"/>
    <property type="match status" value="1"/>
</dbReference>
<comment type="function">
    <text evidence="1">Probable mannan synthase which consists of a 4-beta-mannosyltransferase activity on mannan using GDP-mannose. The beta-1,4-mannan product is the backbone for galactomannan synthesis by galactomannan galactosyltransferase. Galactomannan is a noncellulosic polysaccharides of plant cell wall.</text>
</comment>
<comment type="catalytic activity">
    <reaction evidence="1">
        <text>GDP-mannose + (glucomannan)n = GDP + (glucomannan)n+1.</text>
        <dbReference type="EC" id="2.4.1.32"/>
    </reaction>
</comment>
<comment type="subcellular location">
    <subcellularLocation>
        <location evidence="4">Golgi apparatus membrane</location>
        <topology evidence="4">Multi-pass membrane protein</topology>
    </subcellularLocation>
</comment>
<comment type="similarity">
    <text evidence="4">Belongs to the glycosyltransferase 2 family. Plant cellulose synthase-like A subfamily.</text>
</comment>
<comment type="sequence caution" evidence="4">
    <conflict type="erroneous gene model prediction">
        <sequence resource="EMBL-CDS" id="ABF94194"/>
    </conflict>
</comment>
<comment type="sequence caution" evidence="4">
    <conflict type="frameshift">
        <sequence resource="EMBL" id="AK287855"/>
    </conflict>
</comment>
<comment type="sequence caution" evidence="4">
    <conflict type="erroneous gene model prediction">
        <sequence resource="EMBL-CDS" id="BAF11014"/>
    </conflict>
</comment>
<comment type="sequence caution" evidence="4">
    <conflict type="erroneous gene model prediction">
        <sequence resource="EMBL-CDS" id="DAA01745"/>
    </conflict>
</comment>
<comment type="sequence caution" evidence="4">
    <conflict type="erroneous gene model prediction">
        <sequence resource="EMBL-CDS" id="EEE58400"/>
    </conflict>
</comment>
<feature type="chain" id="PRO_0000319375" description="Probable glucomannan 4-beta-mannosyltransferase 4">
    <location>
        <begin position="1"/>
        <end position="549"/>
    </location>
</feature>
<feature type="transmembrane region" description="Helical" evidence="2">
    <location>
        <begin position="35"/>
        <end position="55"/>
    </location>
</feature>
<feature type="transmembrane region" description="Helical" evidence="2">
    <location>
        <begin position="383"/>
        <end position="403"/>
    </location>
</feature>
<feature type="transmembrane region" description="Helical" evidence="2">
    <location>
        <begin position="406"/>
        <end position="426"/>
    </location>
</feature>
<feature type="transmembrane region" description="Helical" evidence="2">
    <location>
        <begin position="497"/>
        <end position="517"/>
    </location>
</feature>
<feature type="transmembrane region" description="Helical" evidence="2">
    <location>
        <begin position="523"/>
        <end position="543"/>
    </location>
</feature>
<feature type="active site" evidence="2">
    <location>
        <position position="151"/>
    </location>
</feature>
<feature type="active site" evidence="2">
    <location>
        <position position="304"/>
    </location>
</feature>
<feature type="binding site" evidence="2">
    <location>
        <position position="210"/>
    </location>
    <ligand>
        <name>substrate</name>
    </ligand>
</feature>
<feature type="binding site" evidence="2">
    <location>
        <position position="212"/>
    </location>
    <ligand>
        <name>substrate</name>
    </ligand>
</feature>
<proteinExistence type="evidence at transcript level"/>
<keyword id="KW-0961">Cell wall biogenesis/degradation</keyword>
<keyword id="KW-0328">Glycosyltransferase</keyword>
<keyword id="KW-0333">Golgi apparatus</keyword>
<keyword id="KW-0472">Membrane</keyword>
<keyword id="KW-1185">Reference proteome</keyword>
<keyword id="KW-0808">Transferase</keyword>
<keyword id="KW-0812">Transmembrane</keyword>
<keyword id="KW-1133">Transmembrane helix</keyword>
<sequence>MEGQWGRWRLAAAAAASSSGDQIAAAWAVVRARAVAPVLQFAVWACMAMSVMLVLEVAYMSLVSLVAVKLLRRVPERRYKWEPITTGSGGVGGGDGEDEEAATGGREAAAFPMVLVQIPMYNEKEVYKLSIGAACALTWPPDRIIIQVLDDSTDPAIKDLVELECKDWARKEINIKYEIRDNRKGYKAGALKKGMEHIYTQQCDFVAIFDADFQPESDFLLKTIPFLVHNPKIGLVQTRWEFVNYDVCLMTRIQKMSLDYHFKVEQESGSSMHSFFGFNGTAGVWRVSAINEAGGWKDRTTVEDMDLAVRASLKGWQFLYVGDIRVKSELPSTFKAYRHQQHRWTCGAANLFRKMATEIAKNKGVSVWKKLHLLYSFFFVRRVVAPILTFLFYCVVIPLSVMVPEVSIPVWGMVYIPTAITIMNAIRNPGSIHLMPFWILFENVMAMHRMRAALTGLLETMNVNQWVVTEKVGDHVKDKLEVPLLEPLKPTDCVERIYIPELMVAFYLLVCASYDLVLGAKHYYLYIYLQAFAFIALGFGFAGTSTPCS</sequence>